<sequence length="455" mass="50072">MELLIKLITFLLFSMPAITSSQYLGNNLLTSRKIFLKQEEISSYAVVFDAGSTGSRIHVYHFNQNLDLLHIGKGVEYYNKITPGLSSYANNPEQAAKSLIPLLEQAEDVVPDDLQPKTPVRLGATAGLRLLNGDASEKILQSVRDMLSNRSTFNVQPDAVSIIDGTQEGSYLWVTVNYALGNLGKKYTKTVGVIDLGGGSVQMAYAVSKKTAKNAPKVADGDDPYIKKVVLKGIPYDLYVHSYLHFGREASRAEILKLTPRSPNPCLLAGFNGIYTYSGEEFKATAYTSGANFNKCKNTIRKALKLNYPCPYQNCTFGGIWNGGGGNGQKNLFASSSFFYLPEDTGMVDASTPNFILRPVDIETKAKEACALNFEDAKSTYPFLDKKNVASYVCMDLIYQYVLLVDGFGLDPLQKITSGKEIEYQDAIVEAAWPLGNAVEAISALPKFERLMYFV</sequence>
<keyword id="KW-0378">Hydrolase</keyword>
<keyword id="KW-0509">mRNA transport</keyword>
<keyword id="KW-0539">Nucleus</keyword>
<keyword id="KW-0813">Transport</keyword>
<feature type="chain" id="PRO_0000209921" description="Nucleoside-triphosphatase">
    <location>
        <begin position="1"/>
        <end position="455"/>
    </location>
</feature>
<feature type="active site" description="Proton acceptor" evidence="1">
    <location>
        <position position="168"/>
    </location>
</feature>
<evidence type="ECO:0000250" key="1"/>
<evidence type="ECO:0000305" key="2"/>
<organism>
    <name type="scientific">Pisum sativum</name>
    <name type="common">Garden pea</name>
    <name type="synonym">Lathyrus oleraceus</name>
    <dbReference type="NCBI Taxonomy" id="3888"/>
    <lineage>
        <taxon>Eukaryota</taxon>
        <taxon>Viridiplantae</taxon>
        <taxon>Streptophyta</taxon>
        <taxon>Embryophyta</taxon>
        <taxon>Tracheophyta</taxon>
        <taxon>Spermatophyta</taxon>
        <taxon>Magnoliopsida</taxon>
        <taxon>eudicotyledons</taxon>
        <taxon>Gunneridae</taxon>
        <taxon>Pentapetalae</taxon>
        <taxon>rosids</taxon>
        <taxon>fabids</taxon>
        <taxon>Fabales</taxon>
        <taxon>Fabaceae</taxon>
        <taxon>Papilionoideae</taxon>
        <taxon>50 kb inversion clade</taxon>
        <taxon>NPAAA clade</taxon>
        <taxon>Hologalegina</taxon>
        <taxon>IRL clade</taxon>
        <taxon>Fabeae</taxon>
        <taxon>Pisum</taxon>
    </lineage>
</organism>
<comment type="function">
    <text>Might be involved in RNA transport out of nuclei.</text>
</comment>
<comment type="catalytic activity">
    <reaction>
        <text>a ribonucleoside 5'-triphosphate + H2O = a ribonucleoside 5'-diphosphate + phosphate + H(+)</text>
        <dbReference type="Rhea" id="RHEA:23680"/>
        <dbReference type="ChEBI" id="CHEBI:15377"/>
        <dbReference type="ChEBI" id="CHEBI:15378"/>
        <dbReference type="ChEBI" id="CHEBI:43474"/>
        <dbReference type="ChEBI" id="CHEBI:57930"/>
        <dbReference type="ChEBI" id="CHEBI:61557"/>
        <dbReference type="EC" id="3.6.1.15"/>
    </reaction>
</comment>
<comment type="subcellular location">
    <subcellularLocation>
        <location>Nucleus</location>
    </subcellularLocation>
</comment>
<comment type="similarity">
    <text evidence="2">Belongs to the GDA1/CD39 NTPase family.</text>
</comment>
<proteinExistence type="evidence at transcript level"/>
<protein>
    <recommendedName>
        <fullName>Nucleoside-triphosphatase</fullName>
        <shortName>NTPase</shortName>
        <ecNumber>3.6.1.15</ecNumber>
    </recommendedName>
    <alternativeName>
        <fullName>Nucleoside triphosphate phosphohydrolase</fullName>
        <shortName>Apyrase</shortName>
    </alternativeName>
</protein>
<reference key="1">
    <citation type="journal article" date="1996" name="Plant Mol. Biol.">
        <title>Light-modulated abundance of an mRNA encoding a calmodulin-regulated, chromatin-associated NTPase in pea.</title>
        <authorList>
            <person name="Hsieh H."/>
            <person name="Tong C.G."/>
            <person name="Thomas C."/>
            <person name="Roux S.J."/>
        </authorList>
    </citation>
    <scope>NUCLEOTIDE SEQUENCE [MRNA]</scope>
    <source>
        <strain>cv. Alaska</strain>
        <tissue>Plumule</tissue>
    </source>
</reference>
<reference key="2">
    <citation type="journal article" date="2001" name="Acta Physiol. Plant.">
        <title>Structure of the coding region and mRNA variants of the apyrase gene from pea (Pisum sativum).</title>
        <authorList>
            <person name="Shibata K."/>
            <person name="Abe S."/>
            <person name="Davies E."/>
        </authorList>
    </citation>
    <scope>NUCLEOTIDE SEQUENCE [MRNA]</scope>
    <source>
        <strain>cv. Alaska</strain>
        <tissue>Stem</tissue>
    </source>
</reference>
<name>NTPA_PEA</name>
<accession>P52914</accession>
<dbReference type="EC" id="3.6.1.15"/>
<dbReference type="EMBL" id="Z32743">
    <property type="protein sequence ID" value="CAA83655.1"/>
    <property type="molecule type" value="mRNA"/>
</dbReference>
<dbReference type="EMBL" id="AB027614">
    <property type="protein sequence ID" value="BAB18900.1"/>
    <property type="molecule type" value="mRNA"/>
</dbReference>
<dbReference type="PIR" id="S65147">
    <property type="entry name" value="S48859"/>
</dbReference>
<dbReference type="RefSeq" id="NP_001414507.1">
    <property type="nucleotide sequence ID" value="NM_001427578.1"/>
</dbReference>
<dbReference type="SMR" id="P52914"/>
<dbReference type="EnsemblPlants" id="Psat3g090960.1">
    <property type="protein sequence ID" value="Psat3g090960.1.cds"/>
    <property type="gene ID" value="Psat3g090960"/>
</dbReference>
<dbReference type="GeneID" id="127126679"/>
<dbReference type="Gramene" id="Psat3g090960.1">
    <property type="protein sequence ID" value="Psat3g090960.1.cds"/>
    <property type="gene ID" value="Psat3g090960"/>
</dbReference>
<dbReference type="KEGG" id="ag:CAA83655"/>
<dbReference type="OrthoDB" id="6372431at2759"/>
<dbReference type="BioCyc" id="MetaCyc:MONOMER-17880"/>
<dbReference type="GO" id="GO:0016020">
    <property type="term" value="C:membrane"/>
    <property type="evidence" value="ECO:0007669"/>
    <property type="project" value="TreeGrafter"/>
</dbReference>
<dbReference type="GO" id="GO:0005634">
    <property type="term" value="C:nucleus"/>
    <property type="evidence" value="ECO:0007669"/>
    <property type="project" value="UniProtKB-SubCell"/>
</dbReference>
<dbReference type="GO" id="GO:0017110">
    <property type="term" value="F:nucleoside diphosphate phosphatase activity"/>
    <property type="evidence" value="ECO:0007669"/>
    <property type="project" value="TreeGrafter"/>
</dbReference>
<dbReference type="GO" id="GO:0017111">
    <property type="term" value="F:ribonucleoside triphosphate phosphatase activity"/>
    <property type="evidence" value="ECO:0007669"/>
    <property type="project" value="UniProtKB-EC"/>
</dbReference>
<dbReference type="GO" id="GO:0051028">
    <property type="term" value="P:mRNA transport"/>
    <property type="evidence" value="ECO:0007669"/>
    <property type="project" value="UniProtKB-KW"/>
</dbReference>
<dbReference type="GO" id="GO:0009134">
    <property type="term" value="P:nucleoside diphosphate catabolic process"/>
    <property type="evidence" value="ECO:0007669"/>
    <property type="project" value="TreeGrafter"/>
</dbReference>
<dbReference type="CDD" id="cd24041">
    <property type="entry name" value="ASKHA_NBD_AtAPY1-like"/>
    <property type="match status" value="1"/>
</dbReference>
<dbReference type="FunFam" id="3.30.420.150:FF:000008">
    <property type="entry name" value="Apyrase 1"/>
    <property type="match status" value="1"/>
</dbReference>
<dbReference type="FunFam" id="3.30.420.40:FF:000052">
    <property type="entry name" value="Ectonucleoside triphosphate diphosphohydrolase 5"/>
    <property type="match status" value="1"/>
</dbReference>
<dbReference type="Gene3D" id="3.30.420.40">
    <property type="match status" value="1"/>
</dbReference>
<dbReference type="Gene3D" id="3.30.420.150">
    <property type="entry name" value="Exopolyphosphatase. Domain 2"/>
    <property type="match status" value="1"/>
</dbReference>
<dbReference type="InterPro" id="IPR000407">
    <property type="entry name" value="GDA1_CD39_NTPase"/>
</dbReference>
<dbReference type="PANTHER" id="PTHR11782">
    <property type="entry name" value="ADENOSINE/GUANOSINE DIPHOSPHATASE"/>
    <property type="match status" value="1"/>
</dbReference>
<dbReference type="PANTHER" id="PTHR11782:SF80">
    <property type="entry name" value="GDA1_CD39 NUCLEOSIDE PHOSPHATASE FAMILY PROTEIN"/>
    <property type="match status" value="1"/>
</dbReference>
<dbReference type="Pfam" id="PF01150">
    <property type="entry name" value="GDA1_CD39"/>
    <property type="match status" value="1"/>
</dbReference>
<dbReference type="PROSITE" id="PS01238">
    <property type="entry name" value="GDA1_CD39_NTPASE"/>
    <property type="match status" value="1"/>
</dbReference>